<dbReference type="EC" id="2.3.1.181" evidence="1"/>
<dbReference type="EMBL" id="CR931997">
    <property type="protein sequence ID" value="CAI36868.1"/>
    <property type="status" value="ALT_INIT"/>
    <property type="molecule type" value="Genomic_DNA"/>
</dbReference>
<dbReference type="RefSeq" id="WP_011273328.1">
    <property type="nucleotide sequence ID" value="NC_007164.1"/>
</dbReference>
<dbReference type="SMR" id="Q4JWD9"/>
<dbReference type="STRING" id="306537.jk0706"/>
<dbReference type="KEGG" id="cjk:jk0706"/>
<dbReference type="eggNOG" id="COG0321">
    <property type="taxonomic scope" value="Bacteria"/>
</dbReference>
<dbReference type="HOGENOM" id="CLU_035168_2_1_11"/>
<dbReference type="OrthoDB" id="9787061at2"/>
<dbReference type="UniPathway" id="UPA00538">
    <property type="reaction ID" value="UER00592"/>
</dbReference>
<dbReference type="Proteomes" id="UP000000545">
    <property type="component" value="Chromosome"/>
</dbReference>
<dbReference type="GO" id="GO:0005737">
    <property type="term" value="C:cytoplasm"/>
    <property type="evidence" value="ECO:0007669"/>
    <property type="project" value="UniProtKB-SubCell"/>
</dbReference>
<dbReference type="GO" id="GO:0033819">
    <property type="term" value="F:lipoyl(octanoyl) transferase activity"/>
    <property type="evidence" value="ECO:0007669"/>
    <property type="project" value="UniProtKB-EC"/>
</dbReference>
<dbReference type="GO" id="GO:0036211">
    <property type="term" value="P:protein modification process"/>
    <property type="evidence" value="ECO:0007669"/>
    <property type="project" value="InterPro"/>
</dbReference>
<dbReference type="CDD" id="cd16444">
    <property type="entry name" value="LipB"/>
    <property type="match status" value="1"/>
</dbReference>
<dbReference type="Gene3D" id="3.30.930.10">
    <property type="entry name" value="Bira Bifunctional Protein, Domain 2"/>
    <property type="match status" value="1"/>
</dbReference>
<dbReference type="HAMAP" id="MF_00013">
    <property type="entry name" value="LipB"/>
    <property type="match status" value="1"/>
</dbReference>
<dbReference type="InterPro" id="IPR045864">
    <property type="entry name" value="aa-tRNA-synth_II/BPL/LPL"/>
</dbReference>
<dbReference type="InterPro" id="IPR004143">
    <property type="entry name" value="BPL_LPL_catalytic"/>
</dbReference>
<dbReference type="InterPro" id="IPR000544">
    <property type="entry name" value="Octanoyltransferase"/>
</dbReference>
<dbReference type="InterPro" id="IPR020605">
    <property type="entry name" value="Octanoyltransferase_CS"/>
</dbReference>
<dbReference type="NCBIfam" id="TIGR00214">
    <property type="entry name" value="lipB"/>
    <property type="match status" value="1"/>
</dbReference>
<dbReference type="NCBIfam" id="NF010925">
    <property type="entry name" value="PRK14345.1"/>
    <property type="match status" value="1"/>
</dbReference>
<dbReference type="PANTHER" id="PTHR10993:SF7">
    <property type="entry name" value="LIPOYLTRANSFERASE 2, MITOCHONDRIAL-RELATED"/>
    <property type="match status" value="1"/>
</dbReference>
<dbReference type="PANTHER" id="PTHR10993">
    <property type="entry name" value="OCTANOYLTRANSFERASE"/>
    <property type="match status" value="1"/>
</dbReference>
<dbReference type="Pfam" id="PF21948">
    <property type="entry name" value="LplA-B_cat"/>
    <property type="match status" value="1"/>
</dbReference>
<dbReference type="PIRSF" id="PIRSF016262">
    <property type="entry name" value="LPLase"/>
    <property type="match status" value="1"/>
</dbReference>
<dbReference type="SUPFAM" id="SSF55681">
    <property type="entry name" value="Class II aaRS and biotin synthetases"/>
    <property type="match status" value="1"/>
</dbReference>
<dbReference type="PROSITE" id="PS51733">
    <property type="entry name" value="BPL_LPL_CATALYTIC"/>
    <property type="match status" value="1"/>
</dbReference>
<dbReference type="PROSITE" id="PS01313">
    <property type="entry name" value="LIPB"/>
    <property type="match status" value="1"/>
</dbReference>
<accession>Q4JWD9</accession>
<gene>
    <name evidence="1" type="primary">lipB</name>
    <name type="ordered locus">jk0706</name>
</gene>
<name>LIPB_CORJK</name>
<protein>
    <recommendedName>
        <fullName evidence="1">Octanoyltransferase</fullName>
        <ecNumber evidence="1">2.3.1.181</ecNumber>
    </recommendedName>
    <alternativeName>
        <fullName evidence="1">Lipoate-protein ligase B</fullName>
    </alternativeName>
    <alternativeName>
        <fullName evidence="1">Lipoyl/octanoyl transferase</fullName>
    </alternativeName>
    <alternativeName>
        <fullName evidence="1">Octanoyl-[acyl-carrier-protein]-protein N-octanoyltransferase</fullName>
    </alternativeName>
</protein>
<feature type="chain" id="PRO_0000242715" description="Octanoyltransferase">
    <location>
        <begin position="1"/>
        <end position="240"/>
    </location>
</feature>
<feature type="domain" description="BPL/LPL catalytic" evidence="2">
    <location>
        <begin position="51"/>
        <end position="236"/>
    </location>
</feature>
<feature type="region of interest" description="Disordered" evidence="3">
    <location>
        <begin position="1"/>
        <end position="22"/>
    </location>
</feature>
<feature type="compositionally biased region" description="Low complexity" evidence="3">
    <location>
        <begin position="10"/>
        <end position="21"/>
    </location>
</feature>
<feature type="active site" description="Acyl-thioester intermediate" evidence="1">
    <location>
        <position position="197"/>
    </location>
</feature>
<feature type="binding site" evidence="1">
    <location>
        <begin position="89"/>
        <end position="96"/>
    </location>
    <ligand>
        <name>substrate</name>
    </ligand>
</feature>
<feature type="binding site" evidence="1">
    <location>
        <begin position="166"/>
        <end position="168"/>
    </location>
    <ligand>
        <name>substrate</name>
    </ligand>
</feature>
<feature type="binding site" evidence="1">
    <location>
        <begin position="179"/>
        <end position="181"/>
    </location>
    <ligand>
        <name>substrate</name>
    </ligand>
</feature>
<feature type="site" description="Lowers pKa of active site Cys" evidence="1">
    <location>
        <position position="163"/>
    </location>
</feature>
<sequence length="240" mass="25675">MGTTGTNDGATTPPANTSTPAVDIDVRDLGTVDYEDTWHLQANLAAQRAEEKIPDTILLLQHPPTYTAGKRTQDSDRPTNGLPVVDVDRGGRITWHGPGQLVAYPIIKLADPVDVVDYVRRLEQALIQTCEDLGLHGTGRVEGRSGVWLPAGVINGELKPARKIAAIGIRVTRGVTMHGVALNCDNTMEYYDHIVPCGLADAGVTTLTEELGRDVSVSDAYSSLAHNLVDALNGDLPVHS</sequence>
<comment type="function">
    <text evidence="1">Catalyzes the transfer of endogenously produced octanoic acid from octanoyl-acyl-carrier-protein onto the lipoyl domains of lipoate-dependent enzymes. Lipoyl-ACP can also act as a substrate although octanoyl-ACP is likely to be the physiological substrate.</text>
</comment>
<comment type="catalytic activity">
    <reaction evidence="1">
        <text>octanoyl-[ACP] + L-lysyl-[protein] = N(6)-octanoyl-L-lysyl-[protein] + holo-[ACP] + H(+)</text>
        <dbReference type="Rhea" id="RHEA:17665"/>
        <dbReference type="Rhea" id="RHEA-COMP:9636"/>
        <dbReference type="Rhea" id="RHEA-COMP:9685"/>
        <dbReference type="Rhea" id="RHEA-COMP:9752"/>
        <dbReference type="Rhea" id="RHEA-COMP:9928"/>
        <dbReference type="ChEBI" id="CHEBI:15378"/>
        <dbReference type="ChEBI" id="CHEBI:29969"/>
        <dbReference type="ChEBI" id="CHEBI:64479"/>
        <dbReference type="ChEBI" id="CHEBI:78463"/>
        <dbReference type="ChEBI" id="CHEBI:78809"/>
        <dbReference type="EC" id="2.3.1.181"/>
    </reaction>
</comment>
<comment type="pathway">
    <text evidence="1">Protein modification; protein lipoylation via endogenous pathway; protein N(6)-(lipoyl)lysine from octanoyl-[acyl-carrier-protein]: step 1/2.</text>
</comment>
<comment type="subcellular location">
    <subcellularLocation>
        <location evidence="1">Cytoplasm</location>
    </subcellularLocation>
</comment>
<comment type="miscellaneous">
    <text evidence="1">In the reaction, the free carboxyl group of octanoic acid is attached via an amide linkage to the epsilon-amino group of a specific lysine residue of lipoyl domains of lipoate-dependent enzymes.</text>
</comment>
<comment type="similarity">
    <text evidence="1">Belongs to the LipB family.</text>
</comment>
<comment type="sequence caution" evidence="4">
    <conflict type="erroneous initiation">
        <sequence resource="EMBL-CDS" id="CAI36868"/>
    </conflict>
    <text>Extended N-terminus.</text>
</comment>
<proteinExistence type="inferred from homology"/>
<evidence type="ECO:0000255" key="1">
    <source>
        <dbReference type="HAMAP-Rule" id="MF_00013"/>
    </source>
</evidence>
<evidence type="ECO:0000255" key="2">
    <source>
        <dbReference type="PROSITE-ProRule" id="PRU01067"/>
    </source>
</evidence>
<evidence type="ECO:0000256" key="3">
    <source>
        <dbReference type="SAM" id="MobiDB-lite"/>
    </source>
</evidence>
<evidence type="ECO:0000305" key="4"/>
<keyword id="KW-0012">Acyltransferase</keyword>
<keyword id="KW-0963">Cytoplasm</keyword>
<keyword id="KW-1185">Reference proteome</keyword>
<keyword id="KW-0808">Transferase</keyword>
<organism>
    <name type="scientific">Corynebacterium jeikeium (strain K411)</name>
    <dbReference type="NCBI Taxonomy" id="306537"/>
    <lineage>
        <taxon>Bacteria</taxon>
        <taxon>Bacillati</taxon>
        <taxon>Actinomycetota</taxon>
        <taxon>Actinomycetes</taxon>
        <taxon>Mycobacteriales</taxon>
        <taxon>Corynebacteriaceae</taxon>
        <taxon>Corynebacterium</taxon>
    </lineage>
</organism>
<reference key="1">
    <citation type="journal article" date="2005" name="J. Bacteriol.">
        <title>Complete genome sequence and analysis of the multiresistant nosocomial pathogen Corynebacterium jeikeium K411, a lipid-requiring bacterium of the human skin flora.</title>
        <authorList>
            <person name="Tauch A."/>
            <person name="Kaiser O."/>
            <person name="Hain T."/>
            <person name="Goesmann A."/>
            <person name="Weisshaar B."/>
            <person name="Albersmeier A."/>
            <person name="Bekel T."/>
            <person name="Bischoff N."/>
            <person name="Brune I."/>
            <person name="Chakraborty T."/>
            <person name="Kalinowski J."/>
            <person name="Meyer F."/>
            <person name="Rupp O."/>
            <person name="Schneiker S."/>
            <person name="Viehoever P."/>
            <person name="Puehler A."/>
        </authorList>
    </citation>
    <scope>NUCLEOTIDE SEQUENCE [LARGE SCALE GENOMIC DNA]</scope>
    <source>
        <strain>K411</strain>
    </source>
</reference>